<gene>
    <name type="ordered locus">HI_0131</name>
</gene>
<organism>
    <name type="scientific">Haemophilus influenzae (strain ATCC 51907 / DSM 11121 / KW20 / Rd)</name>
    <dbReference type="NCBI Taxonomy" id="71421"/>
    <lineage>
        <taxon>Bacteria</taxon>
        <taxon>Pseudomonadati</taxon>
        <taxon>Pseudomonadota</taxon>
        <taxon>Gammaproteobacteria</taxon>
        <taxon>Pasteurellales</taxon>
        <taxon>Pasteurellaceae</taxon>
        <taxon>Haemophilus</taxon>
    </lineage>
</organism>
<dbReference type="EMBL" id="L42023">
    <property type="protein sequence ID" value="AAC21803.1"/>
    <property type="molecule type" value="Genomic_DNA"/>
</dbReference>
<dbReference type="PIR" id="D64002">
    <property type="entry name" value="D64002"/>
</dbReference>
<dbReference type="PIR" id="E64002">
    <property type="entry name" value="E64002"/>
</dbReference>
<dbReference type="RefSeq" id="NP_438300.1">
    <property type="nucleotide sequence ID" value="NC_000907.1"/>
</dbReference>
<dbReference type="SMR" id="P43951"/>
<dbReference type="STRING" id="71421.HI_0131"/>
<dbReference type="EnsemblBacteria" id="AAC21803">
    <property type="protein sequence ID" value="AAC21803"/>
    <property type="gene ID" value="HI_0131"/>
</dbReference>
<dbReference type="KEGG" id="hin:HI_0131"/>
<dbReference type="PATRIC" id="fig|71421.8.peg.133"/>
<dbReference type="eggNOG" id="COG1840">
    <property type="taxonomic scope" value="Bacteria"/>
</dbReference>
<dbReference type="HOGENOM" id="CLU_026974_0_1_6"/>
<dbReference type="OrthoDB" id="305758at2"/>
<dbReference type="PhylomeDB" id="P43951"/>
<dbReference type="BioCyc" id="HINF71421:G1GJ1-141-MONOMER"/>
<dbReference type="Proteomes" id="UP000000579">
    <property type="component" value="Chromosome"/>
</dbReference>
<dbReference type="GO" id="GO:0030288">
    <property type="term" value="C:outer membrane-bounded periplasmic space"/>
    <property type="evidence" value="ECO:0000318"/>
    <property type="project" value="GO_Central"/>
</dbReference>
<dbReference type="GO" id="GO:0030975">
    <property type="term" value="F:thiamine binding"/>
    <property type="evidence" value="ECO:0000318"/>
    <property type="project" value="GO_Central"/>
</dbReference>
<dbReference type="GO" id="GO:0030976">
    <property type="term" value="F:thiamine pyrophosphate binding"/>
    <property type="evidence" value="ECO:0000318"/>
    <property type="project" value="GO_Central"/>
</dbReference>
<dbReference type="GO" id="GO:0015888">
    <property type="term" value="P:thiamine transport"/>
    <property type="evidence" value="ECO:0000318"/>
    <property type="project" value="GO_Central"/>
</dbReference>
<dbReference type="CDD" id="cd13544">
    <property type="entry name" value="PBP2_Fbp_like_1"/>
    <property type="match status" value="1"/>
</dbReference>
<dbReference type="Gene3D" id="3.40.190.10">
    <property type="entry name" value="Periplasmic binding protein-like II"/>
    <property type="match status" value="2"/>
</dbReference>
<dbReference type="InterPro" id="IPR026045">
    <property type="entry name" value="Ferric-bd"/>
</dbReference>
<dbReference type="PANTHER" id="PTHR30006:SF2">
    <property type="entry name" value="ABC TRANSPORTER SUBSTRATE-BINDING PROTEIN"/>
    <property type="match status" value="1"/>
</dbReference>
<dbReference type="PANTHER" id="PTHR30006">
    <property type="entry name" value="THIAMINE-BINDING PERIPLASMIC PROTEIN-RELATED"/>
    <property type="match status" value="1"/>
</dbReference>
<dbReference type="Pfam" id="PF13343">
    <property type="entry name" value="SBP_bac_6"/>
    <property type="match status" value="1"/>
</dbReference>
<dbReference type="PIRSF" id="PIRSF002825">
    <property type="entry name" value="CfbpA"/>
    <property type="match status" value="1"/>
</dbReference>
<dbReference type="SUPFAM" id="SSF53850">
    <property type="entry name" value="Periplasmic binding protein-like II"/>
    <property type="match status" value="1"/>
</dbReference>
<feature type="signal peptide" evidence="1">
    <location>
        <begin position="1"/>
        <end position="27"/>
    </location>
</feature>
<feature type="chain" id="PRO_0000013951" description="Uncharacterized protein HI_0131">
    <location>
        <begin position="28"/>
        <end position="346"/>
    </location>
</feature>
<name>Y131_HAEIN</name>
<sequence length="346" mass="37898">MKFNKISLSVSTALLAAGLAVSGSANAKGRLVVYCSATNILCETTTKAFGEKYDVKTSFIRNGSGSTFAKVEAEKNNPQADVWFGGTFDPQAQAAELGLIEPYKSKHIDEIVERFREPAKTKGHYVSSIYMGILGFGVNTERLAKLGIKEVPKCWKDLTDPRLKGEVQIADPQSAGTAYTALATFVQLWGEKEAFDFLKELHPNVSQYTKSGITPSRNSARGEATIGVGFLHDYALEKRNGAPLELVVPCEGTGYELGGVSILKGARNIDNAKLFVDWALSKEGQELAWKQGDSLQILTNTTAEQSPTAFDPNKLKLINYDFEKYGATEQRKALIEKWVQEVKLAK</sequence>
<evidence type="ECO:0000255" key="1"/>
<reference key="1">
    <citation type="journal article" date="1995" name="Science">
        <title>Whole-genome random sequencing and assembly of Haemophilus influenzae Rd.</title>
        <authorList>
            <person name="Fleischmann R.D."/>
            <person name="Adams M.D."/>
            <person name="White O."/>
            <person name="Clayton R.A."/>
            <person name="Kirkness E.F."/>
            <person name="Kerlavage A.R."/>
            <person name="Bult C.J."/>
            <person name="Tomb J.-F."/>
            <person name="Dougherty B.A."/>
            <person name="Merrick J.M."/>
            <person name="McKenney K."/>
            <person name="Sutton G.G."/>
            <person name="FitzHugh W."/>
            <person name="Fields C.A."/>
            <person name="Gocayne J.D."/>
            <person name="Scott J.D."/>
            <person name="Shirley R."/>
            <person name="Liu L.-I."/>
            <person name="Glodek A."/>
            <person name="Kelley J.M."/>
            <person name="Weidman J.F."/>
            <person name="Phillips C.A."/>
            <person name="Spriggs T."/>
            <person name="Hedblom E."/>
            <person name="Cotton M.D."/>
            <person name="Utterback T.R."/>
            <person name="Hanna M.C."/>
            <person name="Nguyen D.T."/>
            <person name="Saudek D.M."/>
            <person name="Brandon R.C."/>
            <person name="Fine L.D."/>
            <person name="Fritchman J.L."/>
            <person name="Fuhrmann J.L."/>
            <person name="Geoghagen N.S.M."/>
            <person name="Gnehm C.L."/>
            <person name="McDonald L.A."/>
            <person name="Small K.V."/>
            <person name="Fraser C.M."/>
            <person name="Smith H.O."/>
            <person name="Venter J.C."/>
        </authorList>
    </citation>
    <scope>NUCLEOTIDE SEQUENCE [LARGE SCALE GENOMIC DNA]</scope>
    <source>
        <strain>ATCC 51907 / DSM 11121 / KW20 / Rd</strain>
    </source>
</reference>
<reference key="2">
    <citation type="journal article" date="2000" name="Electrophoresis">
        <title>Two-dimensional map of the proteome of Haemophilus influenzae.</title>
        <authorList>
            <person name="Langen H."/>
            <person name="Takacs B."/>
            <person name="Evers S."/>
            <person name="Berndt P."/>
            <person name="Lahm H.W."/>
            <person name="Wipf B."/>
            <person name="Gray C."/>
            <person name="Fountoulakis M."/>
        </authorList>
    </citation>
    <scope>IDENTIFICATION BY MASS SPECTROMETRY</scope>
    <source>
        <strain>ATCC 51907 / DSM 11121 / KW20 / Rd</strain>
    </source>
</reference>
<accession>P43951</accession>
<keyword id="KW-1185">Reference proteome</keyword>
<keyword id="KW-0732">Signal</keyword>
<proteinExistence type="evidence at protein level"/>
<protein>
    <recommendedName>
        <fullName>Uncharacterized protein HI_0131</fullName>
    </recommendedName>
</protein>